<keyword id="KW-0067">ATP-binding</keyword>
<keyword id="KW-0418">Kinase</keyword>
<keyword id="KW-0545">Nucleotide biosynthesis</keyword>
<keyword id="KW-0547">Nucleotide-binding</keyword>
<keyword id="KW-0808">Transferase</keyword>
<proteinExistence type="inferred from homology"/>
<comment type="function">
    <text evidence="1">Phosphorylation of dTMP to form dTDP in both de novo and salvage pathways of dTTP synthesis.</text>
</comment>
<comment type="catalytic activity">
    <reaction evidence="1">
        <text>dTMP + ATP = dTDP + ADP</text>
        <dbReference type="Rhea" id="RHEA:13517"/>
        <dbReference type="ChEBI" id="CHEBI:30616"/>
        <dbReference type="ChEBI" id="CHEBI:58369"/>
        <dbReference type="ChEBI" id="CHEBI:63528"/>
        <dbReference type="ChEBI" id="CHEBI:456216"/>
        <dbReference type="EC" id="2.7.4.9"/>
    </reaction>
</comment>
<comment type="similarity">
    <text evidence="1">Belongs to the thymidylate kinase family.</text>
</comment>
<sequence length="222" mass="24303">MRGKFIVVEGLEGAGKSSVIGLIVKALTDAGMRVEQTREPGGTPMAEAIRECVKHDWDETVSEETELLLMYAARVQLLTNKIYPSLNAGAWVVGDRHDLSSQAYQGGGRGVSEKTMTAISDIALNGFKPDLTLYLDVDPAVGLERARGRGELDRIEQAGLGFFERTRARYLSLAENDESIIVVNAMQPMEQVHQDVISIIANYVSQHIDEGSESHKTDQGNN</sequence>
<organism>
    <name type="scientific">Alteromonas mediterranea (strain DSM 17117 / CIP 110805 / LMG 28347 / Deep ecotype)</name>
    <dbReference type="NCBI Taxonomy" id="1774373"/>
    <lineage>
        <taxon>Bacteria</taxon>
        <taxon>Pseudomonadati</taxon>
        <taxon>Pseudomonadota</taxon>
        <taxon>Gammaproteobacteria</taxon>
        <taxon>Alteromonadales</taxon>
        <taxon>Alteromonadaceae</taxon>
        <taxon>Alteromonas/Salinimonas group</taxon>
        <taxon>Alteromonas</taxon>
    </lineage>
</organism>
<feature type="chain" id="PRO_1000097374" description="Thymidylate kinase">
    <location>
        <begin position="1"/>
        <end position="222"/>
    </location>
</feature>
<feature type="binding site" evidence="1">
    <location>
        <begin position="10"/>
        <end position="17"/>
    </location>
    <ligand>
        <name>ATP</name>
        <dbReference type="ChEBI" id="CHEBI:30616"/>
    </ligand>
</feature>
<name>KTHY_ALTMD</name>
<dbReference type="EC" id="2.7.4.9" evidence="1"/>
<dbReference type="EMBL" id="CP001103">
    <property type="protein sequence ID" value="AEA97883.1"/>
    <property type="molecule type" value="Genomic_DNA"/>
</dbReference>
<dbReference type="RefSeq" id="WP_012518215.1">
    <property type="nucleotide sequence ID" value="NC_011138.3"/>
</dbReference>
<dbReference type="SMR" id="B4S1N2"/>
<dbReference type="KEGG" id="amc:MADE_1008725"/>
<dbReference type="HOGENOM" id="CLU_049131_0_1_6"/>
<dbReference type="Proteomes" id="UP000001870">
    <property type="component" value="Chromosome"/>
</dbReference>
<dbReference type="GO" id="GO:0005829">
    <property type="term" value="C:cytosol"/>
    <property type="evidence" value="ECO:0007669"/>
    <property type="project" value="TreeGrafter"/>
</dbReference>
<dbReference type="GO" id="GO:0005524">
    <property type="term" value="F:ATP binding"/>
    <property type="evidence" value="ECO:0007669"/>
    <property type="project" value="UniProtKB-UniRule"/>
</dbReference>
<dbReference type="GO" id="GO:0004798">
    <property type="term" value="F:dTMP kinase activity"/>
    <property type="evidence" value="ECO:0007669"/>
    <property type="project" value="UniProtKB-UniRule"/>
</dbReference>
<dbReference type="GO" id="GO:0006233">
    <property type="term" value="P:dTDP biosynthetic process"/>
    <property type="evidence" value="ECO:0007669"/>
    <property type="project" value="InterPro"/>
</dbReference>
<dbReference type="GO" id="GO:0006235">
    <property type="term" value="P:dTTP biosynthetic process"/>
    <property type="evidence" value="ECO:0007669"/>
    <property type="project" value="UniProtKB-UniRule"/>
</dbReference>
<dbReference type="GO" id="GO:0006227">
    <property type="term" value="P:dUDP biosynthetic process"/>
    <property type="evidence" value="ECO:0007669"/>
    <property type="project" value="TreeGrafter"/>
</dbReference>
<dbReference type="CDD" id="cd01672">
    <property type="entry name" value="TMPK"/>
    <property type="match status" value="1"/>
</dbReference>
<dbReference type="FunFam" id="3.40.50.300:FF:000225">
    <property type="entry name" value="Thymidylate kinase"/>
    <property type="match status" value="1"/>
</dbReference>
<dbReference type="Gene3D" id="3.40.50.300">
    <property type="entry name" value="P-loop containing nucleotide triphosphate hydrolases"/>
    <property type="match status" value="1"/>
</dbReference>
<dbReference type="HAMAP" id="MF_00165">
    <property type="entry name" value="Thymidylate_kinase"/>
    <property type="match status" value="1"/>
</dbReference>
<dbReference type="InterPro" id="IPR027417">
    <property type="entry name" value="P-loop_NTPase"/>
</dbReference>
<dbReference type="InterPro" id="IPR039430">
    <property type="entry name" value="Thymidylate_kin-like_dom"/>
</dbReference>
<dbReference type="InterPro" id="IPR018095">
    <property type="entry name" value="Thymidylate_kin_CS"/>
</dbReference>
<dbReference type="InterPro" id="IPR018094">
    <property type="entry name" value="Thymidylate_kinase"/>
</dbReference>
<dbReference type="NCBIfam" id="TIGR00041">
    <property type="entry name" value="DTMP_kinase"/>
    <property type="match status" value="1"/>
</dbReference>
<dbReference type="PANTHER" id="PTHR10344">
    <property type="entry name" value="THYMIDYLATE KINASE"/>
    <property type="match status" value="1"/>
</dbReference>
<dbReference type="PANTHER" id="PTHR10344:SF4">
    <property type="entry name" value="UMP-CMP KINASE 2, MITOCHONDRIAL"/>
    <property type="match status" value="1"/>
</dbReference>
<dbReference type="Pfam" id="PF02223">
    <property type="entry name" value="Thymidylate_kin"/>
    <property type="match status" value="1"/>
</dbReference>
<dbReference type="SUPFAM" id="SSF52540">
    <property type="entry name" value="P-loop containing nucleoside triphosphate hydrolases"/>
    <property type="match status" value="1"/>
</dbReference>
<dbReference type="PROSITE" id="PS01331">
    <property type="entry name" value="THYMIDYLATE_KINASE"/>
    <property type="match status" value="1"/>
</dbReference>
<accession>B4S1N2</accession>
<accession>F2GA89</accession>
<evidence type="ECO:0000255" key="1">
    <source>
        <dbReference type="HAMAP-Rule" id="MF_00165"/>
    </source>
</evidence>
<protein>
    <recommendedName>
        <fullName evidence="1">Thymidylate kinase</fullName>
        <ecNumber evidence="1">2.7.4.9</ecNumber>
    </recommendedName>
    <alternativeName>
        <fullName evidence="1">dTMP kinase</fullName>
    </alternativeName>
</protein>
<gene>
    <name evidence="1" type="primary">tmk</name>
    <name type="ordered locus">MADE_1008725</name>
</gene>
<reference key="1">
    <citation type="journal article" date="2008" name="ISME J.">
        <title>Comparative genomics of two ecotypes of the marine planktonic copiotroph Alteromonas macleodii suggests alternative lifestyles associated with different kinds of particulate organic matter.</title>
        <authorList>
            <person name="Ivars-Martinez E."/>
            <person name="Martin-Cuadrado A.-B."/>
            <person name="D'Auria G."/>
            <person name="Mira A."/>
            <person name="Ferriera S."/>
            <person name="Johnson J."/>
            <person name="Friedman R."/>
            <person name="Rodriguez-Valera F."/>
        </authorList>
    </citation>
    <scope>NUCLEOTIDE SEQUENCE [LARGE SCALE GENOMIC DNA]</scope>
    <source>
        <strain>DSM 17117 / CIP 110805 / LMG 28347 / Deep ecotype</strain>
    </source>
</reference>